<sequence>MAKKSMIARDVKRKKIVERYAAKRAALMAAFDAAKDPMQRLEIHRKIQALPRNSAPTRIRNRCWATGKPRGVYRDFGLCRNQLRERAHKGELPGVVKSSW</sequence>
<dbReference type="EMBL" id="CP000554">
    <property type="protein sequence ID" value="ABM77355.1"/>
    <property type="molecule type" value="Genomic_DNA"/>
</dbReference>
<dbReference type="RefSeq" id="WP_011825275.1">
    <property type="nucleotide sequence ID" value="NC_008820.1"/>
</dbReference>
<dbReference type="SMR" id="A2C795"/>
<dbReference type="STRING" id="59922.P9303_06031"/>
<dbReference type="KEGG" id="pmf:P9303_06031"/>
<dbReference type="HOGENOM" id="CLU_139869_0_1_3"/>
<dbReference type="BioCyc" id="PMAR59922:G1G80-554-MONOMER"/>
<dbReference type="Proteomes" id="UP000002274">
    <property type="component" value="Chromosome"/>
</dbReference>
<dbReference type="GO" id="GO:0005737">
    <property type="term" value="C:cytoplasm"/>
    <property type="evidence" value="ECO:0007669"/>
    <property type="project" value="UniProtKB-ARBA"/>
</dbReference>
<dbReference type="GO" id="GO:0015935">
    <property type="term" value="C:small ribosomal subunit"/>
    <property type="evidence" value="ECO:0007669"/>
    <property type="project" value="TreeGrafter"/>
</dbReference>
<dbReference type="GO" id="GO:0019843">
    <property type="term" value="F:rRNA binding"/>
    <property type="evidence" value="ECO:0007669"/>
    <property type="project" value="UniProtKB-UniRule"/>
</dbReference>
<dbReference type="GO" id="GO:0003735">
    <property type="term" value="F:structural constituent of ribosome"/>
    <property type="evidence" value="ECO:0007669"/>
    <property type="project" value="InterPro"/>
</dbReference>
<dbReference type="GO" id="GO:0006412">
    <property type="term" value="P:translation"/>
    <property type="evidence" value="ECO:0007669"/>
    <property type="project" value="UniProtKB-UniRule"/>
</dbReference>
<dbReference type="FunFam" id="1.10.287.1480:FF:000001">
    <property type="entry name" value="30S ribosomal protein S14"/>
    <property type="match status" value="1"/>
</dbReference>
<dbReference type="Gene3D" id="1.10.287.1480">
    <property type="match status" value="1"/>
</dbReference>
<dbReference type="HAMAP" id="MF_00537">
    <property type="entry name" value="Ribosomal_uS14_1"/>
    <property type="match status" value="1"/>
</dbReference>
<dbReference type="InterPro" id="IPR001209">
    <property type="entry name" value="Ribosomal_uS14"/>
</dbReference>
<dbReference type="InterPro" id="IPR023036">
    <property type="entry name" value="Ribosomal_uS14_bac/plastid"/>
</dbReference>
<dbReference type="InterPro" id="IPR018271">
    <property type="entry name" value="Ribosomal_uS14_CS"/>
</dbReference>
<dbReference type="NCBIfam" id="NF006477">
    <property type="entry name" value="PRK08881.1"/>
    <property type="match status" value="1"/>
</dbReference>
<dbReference type="PANTHER" id="PTHR19836">
    <property type="entry name" value="30S RIBOSOMAL PROTEIN S14"/>
    <property type="match status" value="1"/>
</dbReference>
<dbReference type="PANTHER" id="PTHR19836:SF19">
    <property type="entry name" value="SMALL RIBOSOMAL SUBUNIT PROTEIN US14M"/>
    <property type="match status" value="1"/>
</dbReference>
<dbReference type="Pfam" id="PF00253">
    <property type="entry name" value="Ribosomal_S14"/>
    <property type="match status" value="1"/>
</dbReference>
<dbReference type="SUPFAM" id="SSF57716">
    <property type="entry name" value="Glucocorticoid receptor-like (DNA-binding domain)"/>
    <property type="match status" value="1"/>
</dbReference>
<dbReference type="PROSITE" id="PS00527">
    <property type="entry name" value="RIBOSOMAL_S14"/>
    <property type="match status" value="1"/>
</dbReference>
<proteinExistence type="inferred from homology"/>
<evidence type="ECO:0000255" key="1">
    <source>
        <dbReference type="HAMAP-Rule" id="MF_00537"/>
    </source>
</evidence>
<evidence type="ECO:0000305" key="2"/>
<protein>
    <recommendedName>
        <fullName evidence="1">Small ribosomal subunit protein uS14</fullName>
    </recommendedName>
    <alternativeName>
        <fullName evidence="2">30S ribosomal protein S14</fullName>
    </alternativeName>
</protein>
<organism>
    <name type="scientific">Prochlorococcus marinus (strain MIT 9303)</name>
    <dbReference type="NCBI Taxonomy" id="59922"/>
    <lineage>
        <taxon>Bacteria</taxon>
        <taxon>Bacillati</taxon>
        <taxon>Cyanobacteriota</taxon>
        <taxon>Cyanophyceae</taxon>
        <taxon>Synechococcales</taxon>
        <taxon>Prochlorococcaceae</taxon>
        <taxon>Prochlorococcus</taxon>
    </lineage>
</organism>
<name>RS14_PROM3</name>
<feature type="chain" id="PRO_1000128499" description="Small ribosomal subunit protein uS14">
    <location>
        <begin position="1"/>
        <end position="100"/>
    </location>
</feature>
<comment type="function">
    <text evidence="1">Binds 16S rRNA, required for the assembly of 30S particles and may also be responsible for determining the conformation of the 16S rRNA at the A site.</text>
</comment>
<comment type="subunit">
    <text evidence="1">Part of the 30S ribosomal subunit. Contacts proteins S3 and S10.</text>
</comment>
<comment type="similarity">
    <text evidence="1">Belongs to the universal ribosomal protein uS14 family.</text>
</comment>
<gene>
    <name evidence="1" type="primary">rpsN</name>
    <name evidence="1" type="synonym">rps14</name>
    <name type="ordered locus">P9303_06031</name>
</gene>
<keyword id="KW-0687">Ribonucleoprotein</keyword>
<keyword id="KW-0689">Ribosomal protein</keyword>
<keyword id="KW-0694">RNA-binding</keyword>
<keyword id="KW-0699">rRNA-binding</keyword>
<reference key="1">
    <citation type="journal article" date="2007" name="PLoS Genet.">
        <title>Patterns and implications of gene gain and loss in the evolution of Prochlorococcus.</title>
        <authorList>
            <person name="Kettler G.C."/>
            <person name="Martiny A.C."/>
            <person name="Huang K."/>
            <person name="Zucker J."/>
            <person name="Coleman M.L."/>
            <person name="Rodrigue S."/>
            <person name="Chen F."/>
            <person name="Lapidus A."/>
            <person name="Ferriera S."/>
            <person name="Johnson J."/>
            <person name="Steglich C."/>
            <person name="Church G.M."/>
            <person name="Richardson P."/>
            <person name="Chisholm S.W."/>
        </authorList>
    </citation>
    <scope>NUCLEOTIDE SEQUENCE [LARGE SCALE GENOMIC DNA]</scope>
    <source>
        <strain>MIT 9303</strain>
    </source>
</reference>
<accession>A2C795</accession>